<accession>Q9ULJ6</accession>
<accession>Q5JSH9</accession>
<accession>Q7Z7E6</accession>
<evidence type="ECO:0000250" key="1">
    <source>
        <dbReference type="UniProtKB" id="Q6P1E1"/>
    </source>
</evidence>
<evidence type="ECO:0000255" key="2">
    <source>
        <dbReference type="PROSITE-ProRule" id="PRU00452"/>
    </source>
</evidence>
<evidence type="ECO:0000256" key="3">
    <source>
        <dbReference type="SAM" id="MobiDB-lite"/>
    </source>
</evidence>
<evidence type="ECO:0000269" key="4">
    <source>
    </source>
</evidence>
<evidence type="ECO:0000269" key="5">
    <source>
    </source>
</evidence>
<evidence type="ECO:0000269" key="6">
    <source>
    </source>
</evidence>
<evidence type="ECO:0000269" key="7">
    <source>
    </source>
</evidence>
<evidence type="ECO:0000269" key="8">
    <source>
    </source>
</evidence>
<evidence type="ECO:0000305" key="9"/>
<evidence type="ECO:0000312" key="10">
    <source>
        <dbReference type="HGNC" id="HGNC:16493"/>
    </source>
</evidence>
<evidence type="ECO:0007744" key="11">
    <source>
    </source>
</evidence>
<evidence type="ECO:0007744" key="12">
    <source>
    </source>
</evidence>
<evidence type="ECO:0007744" key="13">
    <source>
    </source>
</evidence>
<evidence type="ECO:0007744" key="14">
    <source>
    </source>
</evidence>
<evidence type="ECO:0007829" key="15">
    <source>
        <dbReference type="PDB" id="5AIZ"/>
    </source>
</evidence>
<reference key="1">
    <citation type="journal article" date="2003" name="EMBO J.">
        <title>hZimp10 is an androgen receptor co-activator and forms a complex with SUMO-1 at replication foci.</title>
        <authorList>
            <person name="Sharma M."/>
            <person name="Li X."/>
            <person name="Wang Y."/>
            <person name="Zarnegar M."/>
            <person name="Huang C.-Y."/>
            <person name="Palvimo J.J."/>
            <person name="Lim B."/>
            <person name="Sun Z."/>
        </authorList>
    </citation>
    <scope>NUCLEOTIDE SEQUENCE [MRNA] (ISOFORM 1)</scope>
    <scope>FUNCTION</scope>
    <scope>SUBCELLULAR LOCATION</scope>
    <scope>DOMAIN</scope>
    <scope>TISSUE SPECIFICITY</scope>
    <scope>INTERACTION WITH AR</scope>
    <scope>SUMOYLATION</scope>
</reference>
<reference key="2">
    <citation type="journal article" date="1999" name="DNA Res.">
        <title>Prediction of the coding sequences of unidentified human genes. XV. The complete sequences of 100 new cDNA clones from brain which code for large proteins in vitro.</title>
        <authorList>
            <person name="Nagase T."/>
            <person name="Ishikawa K."/>
            <person name="Kikuno R."/>
            <person name="Hirosawa M."/>
            <person name="Nomura N."/>
            <person name="Ohara O."/>
        </authorList>
    </citation>
    <scope>NUCLEOTIDE SEQUENCE [LARGE SCALE MRNA] (ISOFORM 3)</scope>
    <source>
        <tissue>Brain</tissue>
    </source>
</reference>
<reference key="3">
    <citation type="journal article" date="2004" name="Nature">
        <title>The DNA sequence and comparative analysis of human chromosome 10.</title>
        <authorList>
            <person name="Deloukas P."/>
            <person name="Earthrowl M.E."/>
            <person name="Grafham D.V."/>
            <person name="Rubenfield M."/>
            <person name="French L."/>
            <person name="Steward C.A."/>
            <person name="Sims S.K."/>
            <person name="Jones M.C."/>
            <person name="Searle S."/>
            <person name="Scott C."/>
            <person name="Howe K."/>
            <person name="Hunt S.E."/>
            <person name="Andrews T.D."/>
            <person name="Gilbert J.G.R."/>
            <person name="Swarbreck D."/>
            <person name="Ashurst J.L."/>
            <person name="Taylor A."/>
            <person name="Battles J."/>
            <person name="Bird C.P."/>
            <person name="Ainscough R."/>
            <person name="Almeida J.P."/>
            <person name="Ashwell R.I.S."/>
            <person name="Ambrose K.D."/>
            <person name="Babbage A.K."/>
            <person name="Bagguley C.L."/>
            <person name="Bailey J."/>
            <person name="Banerjee R."/>
            <person name="Bates K."/>
            <person name="Beasley H."/>
            <person name="Bray-Allen S."/>
            <person name="Brown A.J."/>
            <person name="Brown J.Y."/>
            <person name="Burford D.C."/>
            <person name="Burrill W."/>
            <person name="Burton J."/>
            <person name="Cahill P."/>
            <person name="Camire D."/>
            <person name="Carter N.P."/>
            <person name="Chapman J.C."/>
            <person name="Clark S.Y."/>
            <person name="Clarke G."/>
            <person name="Clee C.M."/>
            <person name="Clegg S."/>
            <person name="Corby N."/>
            <person name="Coulson A."/>
            <person name="Dhami P."/>
            <person name="Dutta I."/>
            <person name="Dunn M."/>
            <person name="Faulkner L."/>
            <person name="Frankish A."/>
            <person name="Frankland J.A."/>
            <person name="Garner P."/>
            <person name="Garnett J."/>
            <person name="Gribble S."/>
            <person name="Griffiths C."/>
            <person name="Grocock R."/>
            <person name="Gustafson E."/>
            <person name="Hammond S."/>
            <person name="Harley J.L."/>
            <person name="Hart E."/>
            <person name="Heath P.D."/>
            <person name="Ho T.P."/>
            <person name="Hopkins B."/>
            <person name="Horne J."/>
            <person name="Howden P.J."/>
            <person name="Huckle E."/>
            <person name="Hynds C."/>
            <person name="Johnson C."/>
            <person name="Johnson D."/>
            <person name="Kana A."/>
            <person name="Kay M."/>
            <person name="Kimberley A.M."/>
            <person name="Kershaw J.K."/>
            <person name="Kokkinaki M."/>
            <person name="Laird G.K."/>
            <person name="Lawlor S."/>
            <person name="Lee H.M."/>
            <person name="Leongamornlert D.A."/>
            <person name="Laird G."/>
            <person name="Lloyd C."/>
            <person name="Lloyd D.M."/>
            <person name="Loveland J."/>
            <person name="Lovell J."/>
            <person name="McLaren S."/>
            <person name="McLay K.E."/>
            <person name="McMurray A."/>
            <person name="Mashreghi-Mohammadi M."/>
            <person name="Matthews L."/>
            <person name="Milne S."/>
            <person name="Nickerson T."/>
            <person name="Nguyen M."/>
            <person name="Overton-Larty E."/>
            <person name="Palmer S.A."/>
            <person name="Pearce A.V."/>
            <person name="Peck A.I."/>
            <person name="Pelan S."/>
            <person name="Phillimore B."/>
            <person name="Porter K."/>
            <person name="Rice C.M."/>
            <person name="Rogosin A."/>
            <person name="Ross M.T."/>
            <person name="Sarafidou T."/>
            <person name="Sehra H.K."/>
            <person name="Shownkeen R."/>
            <person name="Skuce C.D."/>
            <person name="Smith M."/>
            <person name="Standring L."/>
            <person name="Sycamore N."/>
            <person name="Tester J."/>
            <person name="Thorpe A."/>
            <person name="Torcasso W."/>
            <person name="Tracey A."/>
            <person name="Tromans A."/>
            <person name="Tsolas J."/>
            <person name="Wall M."/>
            <person name="Walsh J."/>
            <person name="Wang H."/>
            <person name="Weinstock K."/>
            <person name="West A.P."/>
            <person name="Willey D.L."/>
            <person name="Whitehead S.L."/>
            <person name="Wilming L."/>
            <person name="Wray P.W."/>
            <person name="Young L."/>
            <person name="Chen Y."/>
            <person name="Lovering R.C."/>
            <person name="Moschonas N.K."/>
            <person name="Siebert R."/>
            <person name="Fechtel K."/>
            <person name="Bentley D."/>
            <person name="Durbin R.M."/>
            <person name="Hubbard T."/>
            <person name="Doucette-Stamm L."/>
            <person name="Beck S."/>
            <person name="Smith D.R."/>
            <person name="Rogers J."/>
        </authorList>
    </citation>
    <scope>NUCLEOTIDE SEQUENCE [LARGE SCALE GENOMIC DNA]</scope>
</reference>
<reference key="4">
    <citation type="journal article" date="2006" name="J. Biol. Chem.">
        <title>The novel PIAS-like protein hZimp10 enhances Smad transcriptional activity.</title>
        <authorList>
            <person name="Li X."/>
            <person name="Thyssen G."/>
            <person name="Beliakoff J."/>
            <person name="Sun Z."/>
        </authorList>
    </citation>
    <scope>FUNCTION</scope>
    <scope>INTERACTION WITH SMAD3 AND SMAD4</scope>
    <scope>SUBCELLULAR LOCATION</scope>
    <scope>DOMAIN</scope>
</reference>
<reference key="5">
    <citation type="journal article" date="2014" name="Nat. Struct. Mol. Biol.">
        <title>Uncovering global SUMOylation signaling networks in a site-specific manner.</title>
        <authorList>
            <person name="Hendriks I.A."/>
            <person name="D'Souza R.C."/>
            <person name="Yang B."/>
            <person name="Verlaan-de Vries M."/>
            <person name="Mann M."/>
            <person name="Vertegaal A.C."/>
        </authorList>
    </citation>
    <scope>SUMOYLATION [LARGE SCALE ANALYSIS] AT LYS-834</scope>
    <scope>IDENTIFICATION BY MASS SPECTROMETRY [LARGE SCALE ANALYSIS]</scope>
</reference>
<reference key="6">
    <citation type="journal article" date="2015" name="Cell Rep.">
        <title>SUMO-2 orchestrates chromatin modifiers in response to DNA damage.</title>
        <authorList>
            <person name="Hendriks I.A."/>
            <person name="Treffers L.W."/>
            <person name="Verlaan-de Vries M."/>
            <person name="Olsen J.V."/>
            <person name="Vertegaal A.C."/>
        </authorList>
    </citation>
    <scope>SUMOYLATION [LARGE SCALE ANALYSIS] AT LYS-834</scope>
    <scope>IDENTIFICATION BY MASS SPECTROMETRY [LARGE SCALE ANALYSIS]</scope>
</reference>
<reference key="7">
    <citation type="journal article" date="2015" name="Mol. Cell. Proteomics">
        <title>System-wide analysis of SUMOylation dynamics in response to replication stress reveals novel small ubiquitin-like modified target proteins and acceptor lysines relevant for genome stability.</title>
        <authorList>
            <person name="Xiao Z."/>
            <person name="Chang J.G."/>
            <person name="Hendriks I.A."/>
            <person name="Sigurdsson J.O."/>
            <person name="Olsen J.V."/>
            <person name="Vertegaal A.C."/>
        </authorList>
    </citation>
    <scope>SUMOYLATION [LARGE SCALE ANALYSIS] AT LYS-834</scope>
    <scope>IDENTIFICATION BY MASS SPECTROMETRY [LARGE SCALE ANALYSIS]</scope>
</reference>
<reference key="8">
    <citation type="journal article" date="2017" name="Nat. Struct. Mol. Biol.">
        <title>Site-specific mapping of the human SUMO proteome reveals co-modification with phosphorylation.</title>
        <authorList>
            <person name="Hendriks I.A."/>
            <person name="Lyon D."/>
            <person name="Young C."/>
            <person name="Jensen L.J."/>
            <person name="Vertegaal A.C."/>
            <person name="Nielsen M.L."/>
        </authorList>
    </citation>
    <scope>SUMOYLATION [LARGE SCALE ANALYSIS] AT LYS-91; LYS-834 AND LYS-843</scope>
    <scope>IDENTIFICATION BY MASS SPECTROMETRY [LARGE SCALE ANALYSIS]</scope>
</reference>
<reference key="9">
    <citation type="journal article" date="2019" name="Am. J. Hum. Genet.">
        <title>ZMIZ1 variants cause a syndromic neurodevelopmental disorder.</title>
        <authorList>
            <consortium name="Deciphering Developmental Disorders Study"/>
            <consortium name="University of Washington Center for Mendelian Genomics"/>
            <person name="Carapito R."/>
            <person name="Ivanova E.L."/>
            <person name="Morlon A."/>
            <person name="Meng L."/>
            <person name="Molitor A."/>
            <person name="Erdmann E."/>
            <person name="Kieffer B."/>
            <person name="Pichot A."/>
            <person name="Naegely L."/>
            <person name="Kolmer A."/>
            <person name="Paul N."/>
            <person name="Hanauer A."/>
            <person name="Tran Mau-Them F."/>
            <person name="Jean-Marcais N."/>
            <person name="Hiatt S.M."/>
            <person name="Cooper G.M."/>
            <person name="Tvrdik T."/>
            <person name="Muir A.M."/>
            <person name="Dimartino C."/>
            <person name="Chopra M."/>
            <person name="Amiel J."/>
            <person name="Gordon C.T."/>
            <person name="Dutreux F."/>
            <person name="Garde A."/>
            <person name="Thauvin-Robinet C."/>
            <person name="Wang X."/>
            <person name="Leduc M.S."/>
            <person name="Phillips M."/>
            <person name="Crawford H.P."/>
            <person name="Kukolich M.K."/>
            <person name="Hunt D."/>
            <person name="Harrison V."/>
            <person name="Kharbanda M."/>
            <person name="Smigiel R."/>
            <person name="Gold N."/>
            <person name="Hung C.Y."/>
            <person name="Viskochil D.H."/>
            <person name="Dugan S.L."/>
            <person name="Bayrak-Toydemir P."/>
            <person name="Joly-Helas G."/>
            <person name="Guerrot A.M."/>
            <person name="Schluth-Bolard C."/>
            <person name="Rio M."/>
            <person name="Wentzensen I.M."/>
            <person name="McWalter K."/>
            <person name="Schnur R.E."/>
            <person name="Lewis A.M."/>
            <person name="Lalani S.R."/>
            <person name="Mensah-Bonsu N."/>
            <person name="Ceraline J."/>
            <person name="Sun Z."/>
            <person name="Ploski R."/>
            <person name="Bacino C.A."/>
            <person name="Mefford H.C."/>
            <person name="Faivre L."/>
            <person name="Bodamer O."/>
            <person name="Chelly J."/>
            <person name="Isidor B."/>
            <person name="Bahram S."/>
        </authorList>
    </citation>
    <scope>FUNCTION</scope>
    <scope>SUBCELLULAR LOCATION</scope>
    <scope>INVOLVEMENT IN NEDDFSA</scope>
    <scope>VARIANTS NEDDFSA ARG-91; THR-287; ILE-296; LYS-296; ILE-298 AND MET-300</scope>
    <scope>CHARACTERIZATION OF VARIANTS NEDDFSA ARG-91 AND MET-300</scope>
</reference>
<reference key="10">
    <citation type="journal article" date="2015" name="Immunity">
        <title>The PIAS-like coactivator Zmiz1 is a direct and selective cofactor of Notch1 in T cell development and leukemia.</title>
        <authorList>
            <person name="Pinnell N."/>
            <person name="Yan R."/>
            <person name="Cho H.J."/>
            <person name="Keeley T."/>
            <person name="Murai M.J."/>
            <person name="Liu Y."/>
            <person name="Alarcon A.S."/>
            <person name="Qin J."/>
            <person name="Wang Q."/>
            <person name="Kuick R."/>
            <person name="Elenitoba-Johnson K.S."/>
            <person name="Maillard I."/>
            <person name="Samuelson L.C."/>
            <person name="Cierpicki T."/>
            <person name="Chiang M.Y."/>
        </authorList>
    </citation>
    <scope>X-RAY CRYSTALLOGRAPHY (1.70 ANGSTROMS) OF 1-118</scope>
    <scope>FUNCTION</scope>
    <scope>INTERACTION WITH NOTCH1 AND RBPJ</scope>
</reference>
<reference key="11">
    <citation type="journal article" date="2006" name="Science">
        <title>The consensus coding sequences of human breast and colorectal cancers.</title>
        <authorList>
            <person name="Sjoeblom T."/>
            <person name="Jones S."/>
            <person name="Wood L.D."/>
            <person name="Parsons D.W."/>
            <person name="Lin J."/>
            <person name="Barber T.D."/>
            <person name="Mandelker D."/>
            <person name="Leary R.J."/>
            <person name="Ptak J."/>
            <person name="Silliman N."/>
            <person name="Szabo S."/>
            <person name="Buckhaults P."/>
            <person name="Farrell C."/>
            <person name="Meeh P."/>
            <person name="Markowitz S.D."/>
            <person name="Willis J."/>
            <person name="Dawson D."/>
            <person name="Willson J.K.V."/>
            <person name="Gazdar A.F."/>
            <person name="Hartigan J."/>
            <person name="Wu L."/>
            <person name="Liu C."/>
            <person name="Parmigiani G."/>
            <person name="Park B.H."/>
            <person name="Bachman K.E."/>
            <person name="Papadopoulos N."/>
            <person name="Vogelstein B."/>
            <person name="Kinzler K.W."/>
            <person name="Velculescu V.E."/>
        </authorList>
    </citation>
    <scope>VARIANT [LARGE SCALE ANALYSIS] VAL-551</scope>
</reference>
<name>ZMIZ1_HUMAN</name>
<protein>
    <recommendedName>
        <fullName evidence="9">Zinc finger MIZ domain-containing protein 1</fullName>
    </recommendedName>
    <alternativeName>
        <fullName>PIAS-like protein Zimp10</fullName>
    </alternativeName>
    <alternativeName>
        <fullName>Retinoic acid-induced protein 17</fullName>
    </alternativeName>
</protein>
<comment type="function">
    <text evidence="1 4 5 7 8">Acts as a transcriptional coactivator. Increases ligand-dependent transcriptional activity of AR and promotes AR sumoylation. The stimulation of AR activity is dependent upon sumoylation (PubMed:14609956, PubMed:26522984). Also functions as a transcriptional coactivator in the TGF-beta signaling pathway by increasing the activity of the SMAD3/SMAD4 transcriptional complex (PubMed:16777850). Involved in transcriptional activation of a subset of NOTCH1 target genes including MYC. Involved in thymocyte and T cell development (By similarity). Involved in the regulation of postmitotic positioning of pyramidal neurons in the developing cerebral cortex (PubMed:30639322).</text>
</comment>
<comment type="subunit">
    <text evidence="1 4 5 7">Interacts with AR, but not with ESR1, NR3C1, PGR, THRB nor VDR. Interacts with NOTCH1 and RBPJ (PubMed:14609956, PubMed:26522984). Interacts with SMARCA4 (By similarity). Interacts (via SP-RING-type domain) with SMAD3 and SMAD4 (via MH2 domain) (PubMed:16777850).</text>
</comment>
<comment type="subcellular location">
    <subcellularLocation>
        <location evidence="4 5">Nucleus</location>
        <location evidence="4 5">Nucleoplasm</location>
    </subcellularLocation>
    <subcellularLocation>
        <location evidence="4">Cytoplasm</location>
    </subcellularLocation>
    <subcellularLocation>
        <location evidence="8">Nucleus</location>
    </subcellularLocation>
    <text evidence="4">Enriched at replication foci throughout S phase.</text>
</comment>
<comment type="alternative products">
    <event type="alternative splicing"/>
    <isoform>
        <id>Q9ULJ6-1</id>
        <name>1</name>
        <sequence type="displayed"/>
    </isoform>
    <isoform>
        <id>Q9ULJ6-3</id>
        <name>3</name>
        <sequence type="described" ref="VSP_061581"/>
    </isoform>
</comment>
<comment type="tissue specificity">
    <text evidence="4">Expressed most abundantly in ovary and, at lower levels, in prostate, spleen and testis. Weak expression, if any, in thymus, small intestine, colon and peripheral blood leukocytes.</text>
</comment>
<comment type="domain">
    <text evidence="5">The SP-RING-type domain mediates interaction with SMAD3 and SMAD4.</text>
</comment>
<comment type="domain">
    <text evidence="4">The C-terminal proline-rich domain possesses a significant intrinsic transcriptional activity. This activity is inhibited by the N-terminus in the full-length protein.</text>
</comment>
<comment type="disease" evidence="8">
    <disease id="DI-05703">
        <name>Neurodevelopmental disorder with dysmorphic facies and distal skeletal anomalies</name>
        <acronym>NEDDFSA</acronym>
        <description>An autosomal dominant disorder characterized by intellectual disability, developmental delay, poor language acquisition, behavioral abnormalities, growth failure, feeding difficulties, microcephaly, facial dysmorphism, and mild skeletal anomalies of the hands and feet.</description>
        <dbReference type="MIM" id="618659"/>
    </disease>
    <text>The disease is caused by variants affecting the gene represented in this entry.</text>
</comment>
<comment type="sequence caution" evidence="9">
    <conflict type="erroneous initiation">
        <sequence resource="EMBL-CDS" id="BAA86538"/>
    </conflict>
    <text>Extended N-terminus.</text>
</comment>
<keyword id="KW-0002">3D-structure</keyword>
<keyword id="KW-0010">Activator</keyword>
<keyword id="KW-0025">Alternative splicing</keyword>
<keyword id="KW-0963">Cytoplasm</keyword>
<keyword id="KW-0225">Disease variant</keyword>
<keyword id="KW-0991">Intellectual disability</keyword>
<keyword id="KW-1017">Isopeptide bond</keyword>
<keyword id="KW-0479">Metal-binding</keyword>
<keyword id="KW-0539">Nucleus</keyword>
<keyword id="KW-1267">Proteomics identification</keyword>
<keyword id="KW-1185">Reference proteome</keyword>
<keyword id="KW-0804">Transcription</keyword>
<keyword id="KW-0805">Transcription regulation</keyword>
<keyword id="KW-0832">Ubl conjugation</keyword>
<keyword id="KW-0862">Zinc</keyword>
<keyword id="KW-0863">Zinc-finger</keyword>
<sequence>MNSMDRHIQQTNDRLQCIKQHLQNPANFHNAATELLDWCGDPRAFQRPFEQSLMGCLTVVSRVAAQQGFDLDLGYRLLAVCAANRDKFTPKSAALLSSWCEELGRLLLLRHQKSRQSDPPGKLPMQPPLSSMSSMKPTLSHSDGSFPYDSVPWQQNTNQPPGSLSVVTTVWGVTNTSQSQVLGNPMANANNPMNPGGNPMASGMTTSNPGLNSPQFAGQQQQFSAKAGPAQPYIQQSMYGRPNYPGSGGFGASYPGGPNAPAGMGIPPHTRPPADFTQPAAAAAAAAVAAAAATATATATATVAALQETQNKDINQYGPMGPTQAYNSQFMNQPGPRGPASMGGSMNPASMAAGMTPSGMSGPPMGMNQPRPPGISPFGTHGQRMPQQTYPGPRPQSLPIQNIKRPYPGEPNYGNQQYGPNSQFPTQPGQYPAPNPPRPLTSPNYPGQRMPSQPSSGQYPPPTVNMGQYYKPEQFNGQNNTFSGSSYSNYSQGNVNRPPRPVPVANYPHSPVPGNPTPPMTPGSSIPPYLSPSQDVKPPFPPDIKPNMSALPPPPANHNDELRLTFPVRDGVVLEPFRLEHNLAVSNHVFHLRPTVHQTLMWRSDLELQFKCYHHEDRQMNTNWPASVQVSVNATPLTIERGDNKTSHKPLHLKHVCQPGRNTIQITVTACCCSHLFVLQLVHRPSVRSVLQGLLKKRLLPAEHCITKIKRNFSSVAASSGNTTLNGEDGVEQTAIKVSLKCPITFRRIQLPARGHDCKHVQCFDLESYLQLNCERGTWRCPVCNKTALLEGLEVDQYMWGILNAIQHSEFEEVTIDPTCSWRPVPIKSDLHIKDDPDGIPSKRFKTMSPSQMIMPNVMEMIAALGPGPSPYPLPPPPGGTNSNDYSSQGNNYQGHGNFDFPHGNPGGTSMNDFMHGPPQLSHPPDMPNNMAALEKPLSHPMQETMPHAGSSDQPHPSIQQGLHVPHPSSQSGPPLHHSGAPPPPPSQPPRQPPQAAPSSHPHSDLTFNPSSALEGQAGAQGASDMPEPSLDLLPELTNPDELLSYLDPPDLPSNSNDDLLSLFENN</sequence>
<feature type="chain" id="PRO_0000218987" description="Zinc finger MIZ domain-containing protein 1">
    <location>
        <begin position="1"/>
        <end position="1067"/>
    </location>
</feature>
<feature type="zinc finger region" description="SP-RING-type" evidence="2">
    <location>
        <begin position="727"/>
        <end position="808"/>
    </location>
</feature>
<feature type="region of interest" description="Sufficient for transactivation activity; sufficient for interaction with NOTCH1" evidence="7">
    <location>
        <begin position="1"/>
        <end position="120"/>
    </location>
</feature>
<feature type="region of interest" description="Disordered" evidence="3">
    <location>
        <begin position="112"/>
        <end position="141"/>
    </location>
</feature>
<feature type="region of interest" description="Disordered" evidence="3">
    <location>
        <begin position="327"/>
        <end position="542"/>
    </location>
</feature>
<feature type="region of interest" description="Transactivation domain" evidence="7">
    <location>
        <begin position="837"/>
        <end position="1067"/>
    </location>
</feature>
<feature type="region of interest" description="Disordered" evidence="3">
    <location>
        <begin position="868"/>
        <end position="1067"/>
    </location>
</feature>
<feature type="compositionally biased region" description="Low complexity" evidence="3">
    <location>
        <begin position="128"/>
        <end position="141"/>
    </location>
</feature>
<feature type="compositionally biased region" description="Polar residues" evidence="3">
    <location>
        <begin position="413"/>
        <end position="429"/>
    </location>
</feature>
<feature type="compositionally biased region" description="Pro residues" evidence="3">
    <location>
        <begin position="431"/>
        <end position="440"/>
    </location>
</feature>
<feature type="compositionally biased region" description="Low complexity" evidence="3">
    <location>
        <begin position="479"/>
        <end position="497"/>
    </location>
</feature>
<feature type="compositionally biased region" description="Pro residues" evidence="3">
    <location>
        <begin position="510"/>
        <end position="521"/>
    </location>
</feature>
<feature type="compositionally biased region" description="Pro residues" evidence="3">
    <location>
        <begin position="868"/>
        <end position="879"/>
    </location>
</feature>
<feature type="compositionally biased region" description="Polar residues" evidence="3">
    <location>
        <begin position="881"/>
        <end position="895"/>
    </location>
</feature>
<feature type="compositionally biased region" description="Polar residues" evidence="3">
    <location>
        <begin position="951"/>
        <end position="961"/>
    </location>
</feature>
<feature type="compositionally biased region" description="Pro residues" evidence="3">
    <location>
        <begin position="981"/>
        <end position="996"/>
    </location>
</feature>
<feature type="compositionally biased region" description="Low complexity" evidence="3">
    <location>
        <begin position="1040"/>
        <end position="1067"/>
    </location>
</feature>
<feature type="binding site" evidence="2">
    <location>
        <position position="758"/>
    </location>
    <ligand>
        <name>Zn(2+)</name>
        <dbReference type="ChEBI" id="CHEBI:29105"/>
    </ligand>
</feature>
<feature type="binding site" evidence="2">
    <location>
        <position position="760"/>
    </location>
    <ligand>
        <name>Zn(2+)</name>
        <dbReference type="ChEBI" id="CHEBI:29105"/>
    </ligand>
</feature>
<feature type="binding site" evidence="2">
    <location>
        <position position="781"/>
    </location>
    <ligand>
        <name>Zn(2+)</name>
        <dbReference type="ChEBI" id="CHEBI:29105"/>
    </ligand>
</feature>
<feature type="binding site" evidence="2">
    <location>
        <position position="784"/>
    </location>
    <ligand>
        <name>Zn(2+)</name>
        <dbReference type="ChEBI" id="CHEBI:29105"/>
    </ligand>
</feature>
<feature type="cross-link" description="Glycyl lysine isopeptide (Lys-Gly) (interchain with G-Cter in SUMO2)" evidence="14">
    <location>
        <position position="91"/>
    </location>
</feature>
<feature type="cross-link" description="Glycyl lysine isopeptide (Lys-Gly) (interchain with G-Cter in SUMO2)" evidence="11 12 13 14">
    <location>
        <position position="834"/>
    </location>
</feature>
<feature type="cross-link" description="Glycyl lysine isopeptide (Lys-Gly) (interchain with G-Cter in SUMO2)" evidence="14">
    <location>
        <position position="843"/>
    </location>
</feature>
<feature type="splice variant" id="VSP_061581" description="In isoform 3.">
    <location>
        <begin position="1"/>
        <end position="124"/>
    </location>
</feature>
<feature type="sequence variant" id="VAR_083438" description="In NEDDFSA; leads to altered positioning of pyramidal neurons; dbSNP:rs1554817910." evidence="8">
    <original>K</original>
    <variation>R</variation>
    <location>
        <position position="91"/>
    </location>
</feature>
<feature type="sequence variant" id="VAR_083439" description="In NEDDFSA; uncertain significance; dbSNP:rs1472883107." evidence="8">
    <original>A</original>
    <variation>T</variation>
    <location>
        <position position="287"/>
    </location>
</feature>
<feature type="sequence variant" id="VAR_083440" description="In NEDDFSA; dbSNP:rs1589579476." evidence="8">
    <original>T</original>
    <variation>I</variation>
    <location>
        <position position="296"/>
    </location>
</feature>
<feature type="sequence variant" id="VAR_083441" description="In NEDDFSA; dbSNP:rs1589579476." evidence="8">
    <original>T</original>
    <variation>K</variation>
    <location>
        <position position="296"/>
    </location>
</feature>
<feature type="sequence variant" id="VAR_083442" description="In NEDDFSA; dbSNP:rs1853549548." evidence="8">
    <original>T</original>
    <variation>I</variation>
    <location>
        <position position="298"/>
    </location>
</feature>
<feature type="sequence variant" id="VAR_083443" description="In NEDDFSA; leads to altered positioning of pyramidal neurons; decreased transcription coactivator activity; does not affect nuclear localization; dbSNP:rs1589579500." evidence="8">
    <original>T</original>
    <variation>M</variation>
    <location>
        <position position="300"/>
    </location>
</feature>
<feature type="sequence variant" id="VAR_036326" description="In a breast cancer sample; somatic mutation." evidence="6">
    <original>L</original>
    <variation>V</variation>
    <location>
        <position position="551"/>
    </location>
</feature>
<feature type="strand" evidence="15">
    <location>
        <begin position="5"/>
        <end position="7"/>
    </location>
</feature>
<feature type="helix" evidence="15">
    <location>
        <begin position="8"/>
        <end position="21"/>
    </location>
</feature>
<feature type="helix" evidence="15">
    <location>
        <begin position="25"/>
        <end position="39"/>
    </location>
</feature>
<feature type="helix" evidence="15">
    <location>
        <begin position="42"/>
        <end position="44"/>
    </location>
</feature>
<feature type="helix" evidence="15">
    <location>
        <begin position="47"/>
        <end position="63"/>
    </location>
</feature>
<feature type="helix" evidence="15">
    <location>
        <begin position="71"/>
        <end position="83"/>
    </location>
</feature>
<feature type="helix" evidence="15">
    <location>
        <begin position="84"/>
        <end position="87"/>
    </location>
</feature>
<feature type="helix" evidence="15">
    <location>
        <begin position="90"/>
        <end position="110"/>
    </location>
</feature>
<proteinExistence type="evidence at protein level"/>
<dbReference type="EMBL" id="AB033050">
    <property type="protein sequence ID" value="BAA86538.2"/>
    <property type="status" value="ALT_INIT"/>
    <property type="molecule type" value="mRNA"/>
</dbReference>
<dbReference type="EMBL" id="AY235683">
    <property type="protein sequence ID" value="AAP13542.1"/>
    <property type="molecule type" value="mRNA"/>
</dbReference>
<dbReference type="EMBL" id="AL391665">
    <property type="status" value="NOT_ANNOTATED_CDS"/>
    <property type="molecule type" value="Genomic_DNA"/>
</dbReference>
<dbReference type="CCDS" id="CCDS7357.1">
    <molecule id="Q9ULJ6-1"/>
</dbReference>
<dbReference type="RefSeq" id="NP_065071.1">
    <molecule id="Q9ULJ6-1"/>
    <property type="nucleotide sequence ID" value="NM_020338.4"/>
</dbReference>
<dbReference type="RefSeq" id="XP_011538282.1">
    <property type="nucleotide sequence ID" value="XM_011539980.2"/>
</dbReference>
<dbReference type="RefSeq" id="XP_016871931.1">
    <property type="nucleotide sequence ID" value="XM_017016442.1"/>
</dbReference>
<dbReference type="RefSeq" id="XP_047281495.1">
    <molecule id="Q9ULJ6-1"/>
    <property type="nucleotide sequence ID" value="XM_047425539.1"/>
</dbReference>
<dbReference type="RefSeq" id="XP_047281496.1">
    <molecule id="Q9ULJ6-1"/>
    <property type="nucleotide sequence ID" value="XM_047425540.1"/>
</dbReference>
<dbReference type="RefSeq" id="XP_047281497.1">
    <molecule id="Q9ULJ6-1"/>
    <property type="nucleotide sequence ID" value="XM_047425541.1"/>
</dbReference>
<dbReference type="RefSeq" id="XP_054222352.1">
    <molecule id="Q9ULJ6-1"/>
    <property type="nucleotide sequence ID" value="XM_054366377.1"/>
</dbReference>
<dbReference type="RefSeq" id="XP_054222353.1">
    <molecule id="Q9ULJ6-1"/>
    <property type="nucleotide sequence ID" value="XM_054366378.1"/>
</dbReference>
<dbReference type="RefSeq" id="XP_054222354.1">
    <molecule id="Q9ULJ6-1"/>
    <property type="nucleotide sequence ID" value="XM_054366379.1"/>
</dbReference>
<dbReference type="RefSeq" id="XP_054222362.1">
    <molecule id="Q9ULJ6-3"/>
    <property type="nucleotide sequence ID" value="XM_054366387.1"/>
</dbReference>
<dbReference type="PDB" id="5AIZ">
    <property type="method" value="X-ray"/>
    <property type="resolution" value="1.70 A"/>
    <property type="chains" value="A=1-118"/>
</dbReference>
<dbReference type="PDBsum" id="5AIZ"/>
<dbReference type="SMR" id="Q9ULJ6"/>
<dbReference type="BioGRID" id="121427">
    <property type="interactions" value="41"/>
</dbReference>
<dbReference type="CORUM" id="Q9ULJ6"/>
<dbReference type="FunCoup" id="Q9ULJ6">
    <property type="interactions" value="3631"/>
</dbReference>
<dbReference type="IntAct" id="Q9ULJ6">
    <property type="interactions" value="21"/>
</dbReference>
<dbReference type="MINT" id="Q9ULJ6"/>
<dbReference type="STRING" id="9606.ENSP00000334474"/>
<dbReference type="GlyGen" id="Q9ULJ6">
    <property type="glycosylation" value="3 sites, 1 O-linked glycan (1 site)"/>
</dbReference>
<dbReference type="iPTMnet" id="Q9ULJ6"/>
<dbReference type="PhosphoSitePlus" id="Q9ULJ6"/>
<dbReference type="BioMuta" id="ZMIZ1"/>
<dbReference type="DMDM" id="56404979"/>
<dbReference type="jPOST" id="Q9ULJ6"/>
<dbReference type="MassIVE" id="Q9ULJ6"/>
<dbReference type="PaxDb" id="9606-ENSP00000334474"/>
<dbReference type="PeptideAtlas" id="Q9ULJ6"/>
<dbReference type="ProteomicsDB" id="85048">
    <molecule id="Q9ULJ6-1"/>
</dbReference>
<dbReference type="Pumba" id="Q9ULJ6"/>
<dbReference type="Antibodypedia" id="29855">
    <property type="antibodies" value="164 antibodies from 26 providers"/>
</dbReference>
<dbReference type="DNASU" id="57178"/>
<dbReference type="Ensembl" id="ENST00000334512.10">
    <molecule id="Q9ULJ6-1"/>
    <property type="protein sequence ID" value="ENSP00000334474.5"/>
    <property type="gene ID" value="ENSG00000108175.19"/>
</dbReference>
<dbReference type="GeneID" id="57178"/>
<dbReference type="KEGG" id="hsa:57178"/>
<dbReference type="MANE-Select" id="ENST00000334512.10">
    <property type="protein sequence ID" value="ENSP00000334474.5"/>
    <property type="RefSeq nucleotide sequence ID" value="NM_020338.4"/>
    <property type="RefSeq protein sequence ID" value="NP_065071.1"/>
</dbReference>
<dbReference type="UCSC" id="uc001kaf.3">
    <molecule id="Q9ULJ6-1"/>
    <property type="organism name" value="human"/>
</dbReference>
<dbReference type="AGR" id="HGNC:16493"/>
<dbReference type="CTD" id="57178"/>
<dbReference type="DisGeNET" id="57178"/>
<dbReference type="GeneCards" id="ZMIZ1"/>
<dbReference type="HGNC" id="HGNC:16493">
    <property type="gene designation" value="ZMIZ1"/>
</dbReference>
<dbReference type="HPA" id="ENSG00000108175">
    <property type="expression patterns" value="Low tissue specificity"/>
</dbReference>
<dbReference type="MalaCards" id="ZMIZ1"/>
<dbReference type="MIM" id="607159">
    <property type="type" value="gene"/>
</dbReference>
<dbReference type="MIM" id="618659">
    <property type="type" value="phenotype"/>
</dbReference>
<dbReference type="neXtProt" id="NX_Q9ULJ6"/>
<dbReference type="OpenTargets" id="ENSG00000108175"/>
<dbReference type="Orphanet" id="528084">
    <property type="disease" value="Non-specific syndromic intellectual disability"/>
</dbReference>
<dbReference type="PharmGKB" id="PA162409804"/>
<dbReference type="VEuPathDB" id="HostDB:ENSG00000108175"/>
<dbReference type="eggNOG" id="KOG2169">
    <property type="taxonomic scope" value="Eukaryota"/>
</dbReference>
<dbReference type="GeneTree" id="ENSGT01030000234539"/>
<dbReference type="HOGENOM" id="CLU_009461_1_0_1"/>
<dbReference type="InParanoid" id="Q9ULJ6"/>
<dbReference type="OMA" id="PPMAMNQ"/>
<dbReference type="OrthoDB" id="27975at2759"/>
<dbReference type="PAN-GO" id="Q9ULJ6">
    <property type="GO annotations" value="2 GO annotations based on evolutionary models"/>
</dbReference>
<dbReference type="PhylomeDB" id="Q9ULJ6"/>
<dbReference type="TreeFam" id="TF316952"/>
<dbReference type="PathwayCommons" id="Q9ULJ6"/>
<dbReference type="SignaLink" id="Q9ULJ6"/>
<dbReference type="SIGNOR" id="Q9ULJ6"/>
<dbReference type="BioGRID-ORCS" id="57178">
    <property type="hits" value="62 hits in 1180 CRISPR screens"/>
</dbReference>
<dbReference type="ChiTaRS" id="ZMIZ1">
    <property type="organism name" value="human"/>
</dbReference>
<dbReference type="EvolutionaryTrace" id="Q9ULJ6"/>
<dbReference type="GeneWiki" id="ZMIZ1"/>
<dbReference type="GenomeRNAi" id="57178"/>
<dbReference type="Pharos" id="Q9ULJ6">
    <property type="development level" value="Tbio"/>
</dbReference>
<dbReference type="PRO" id="PR:Q9ULJ6"/>
<dbReference type="Proteomes" id="UP000005640">
    <property type="component" value="Chromosome 10"/>
</dbReference>
<dbReference type="RNAct" id="Q9ULJ6">
    <property type="molecule type" value="protein"/>
</dbReference>
<dbReference type="Bgee" id="ENSG00000108175">
    <property type="expression patterns" value="Expressed in dorsal motor nucleus of vagus nerve and 211 other cell types or tissues"/>
</dbReference>
<dbReference type="ExpressionAtlas" id="Q9ULJ6">
    <property type="expression patterns" value="baseline and differential"/>
</dbReference>
<dbReference type="GO" id="GO:0000785">
    <property type="term" value="C:chromatin"/>
    <property type="evidence" value="ECO:0000318"/>
    <property type="project" value="GO_Central"/>
</dbReference>
<dbReference type="GO" id="GO:0005737">
    <property type="term" value="C:cytoplasm"/>
    <property type="evidence" value="ECO:0000314"/>
    <property type="project" value="UniProtKB"/>
</dbReference>
<dbReference type="GO" id="GO:0005829">
    <property type="term" value="C:cytosol"/>
    <property type="evidence" value="ECO:0000314"/>
    <property type="project" value="HPA"/>
</dbReference>
<dbReference type="GO" id="GO:0005654">
    <property type="term" value="C:nucleoplasm"/>
    <property type="evidence" value="ECO:0000314"/>
    <property type="project" value="HPA"/>
</dbReference>
<dbReference type="GO" id="GO:0005634">
    <property type="term" value="C:nucleus"/>
    <property type="evidence" value="ECO:0000314"/>
    <property type="project" value="UniProtKB"/>
</dbReference>
<dbReference type="GO" id="GO:0046332">
    <property type="term" value="F:SMAD binding"/>
    <property type="evidence" value="ECO:0000353"/>
    <property type="project" value="UniProtKB"/>
</dbReference>
<dbReference type="GO" id="GO:0061665">
    <property type="term" value="F:SUMO ligase activity"/>
    <property type="evidence" value="ECO:0000318"/>
    <property type="project" value="GO_Central"/>
</dbReference>
<dbReference type="GO" id="GO:0003713">
    <property type="term" value="F:transcription coactivator activity"/>
    <property type="evidence" value="ECO:0000314"/>
    <property type="project" value="UniProtKB"/>
</dbReference>
<dbReference type="GO" id="GO:0008270">
    <property type="term" value="F:zinc ion binding"/>
    <property type="evidence" value="ECO:0007669"/>
    <property type="project" value="UniProtKB-KW"/>
</dbReference>
<dbReference type="GO" id="GO:0030521">
    <property type="term" value="P:androgen receptor signaling pathway"/>
    <property type="evidence" value="ECO:0000314"/>
    <property type="project" value="UniProtKB"/>
</dbReference>
<dbReference type="GO" id="GO:0048844">
    <property type="term" value="P:artery morphogenesis"/>
    <property type="evidence" value="ECO:0007669"/>
    <property type="project" value="Ensembl"/>
</dbReference>
<dbReference type="GO" id="GO:0090398">
    <property type="term" value="P:cellular senescence"/>
    <property type="evidence" value="ECO:0007669"/>
    <property type="project" value="Ensembl"/>
</dbReference>
<dbReference type="GO" id="GO:0048589">
    <property type="term" value="P:developmental growth"/>
    <property type="evidence" value="ECO:0007669"/>
    <property type="project" value="Ensembl"/>
</dbReference>
<dbReference type="GO" id="GO:0003007">
    <property type="term" value="P:heart morphogenesis"/>
    <property type="evidence" value="ECO:0007669"/>
    <property type="project" value="Ensembl"/>
</dbReference>
<dbReference type="GO" id="GO:0001701">
    <property type="term" value="P:in utero embryonic development"/>
    <property type="evidence" value="ECO:0007669"/>
    <property type="project" value="Ensembl"/>
</dbReference>
<dbReference type="GO" id="GO:0048146">
    <property type="term" value="P:positive regulation of fibroblast proliferation"/>
    <property type="evidence" value="ECO:0007669"/>
    <property type="project" value="Ensembl"/>
</dbReference>
<dbReference type="GO" id="GO:0045747">
    <property type="term" value="P:positive regulation of Notch signaling pathway"/>
    <property type="evidence" value="ECO:0000250"/>
    <property type="project" value="UniProtKB"/>
</dbReference>
<dbReference type="GO" id="GO:0045582">
    <property type="term" value="P:positive regulation of T cell differentiation"/>
    <property type="evidence" value="ECO:0000250"/>
    <property type="project" value="UniProtKB"/>
</dbReference>
<dbReference type="GO" id="GO:0045944">
    <property type="term" value="P:positive regulation of transcription by RNA polymerase II"/>
    <property type="evidence" value="ECO:0000314"/>
    <property type="project" value="UniProtKB"/>
</dbReference>
<dbReference type="GO" id="GO:0016925">
    <property type="term" value="P:protein sumoylation"/>
    <property type="evidence" value="ECO:0000318"/>
    <property type="project" value="GO_Central"/>
</dbReference>
<dbReference type="GO" id="GO:0021852">
    <property type="term" value="P:pyramidal neuron migration to cerebral cortex"/>
    <property type="evidence" value="ECO:0000315"/>
    <property type="project" value="UniProtKB"/>
</dbReference>
<dbReference type="GO" id="GO:0006357">
    <property type="term" value="P:regulation of transcription by RNA polymerase II"/>
    <property type="evidence" value="ECO:0000318"/>
    <property type="project" value="GO_Central"/>
</dbReference>
<dbReference type="GO" id="GO:0060395">
    <property type="term" value="P:SMAD protein signal transduction"/>
    <property type="evidence" value="ECO:0000314"/>
    <property type="project" value="UniProtKB"/>
</dbReference>
<dbReference type="GO" id="GO:0007179">
    <property type="term" value="P:transforming growth factor beta receptor signaling pathway"/>
    <property type="evidence" value="ECO:0000314"/>
    <property type="project" value="UniProtKB"/>
</dbReference>
<dbReference type="GO" id="GO:0001570">
    <property type="term" value="P:vasculogenesis"/>
    <property type="evidence" value="ECO:0007669"/>
    <property type="project" value="Ensembl"/>
</dbReference>
<dbReference type="GO" id="GO:0007296">
    <property type="term" value="P:vitellogenesis"/>
    <property type="evidence" value="ECO:0007669"/>
    <property type="project" value="Ensembl"/>
</dbReference>
<dbReference type="FunFam" id="3.30.40.10:FF:000012">
    <property type="entry name" value="Zinc finger MIZ domain-containing protein 2"/>
    <property type="match status" value="1"/>
</dbReference>
<dbReference type="Gene3D" id="3.30.40.10">
    <property type="entry name" value="Zinc/RING finger domain, C3HC4 (zinc finger)"/>
    <property type="match status" value="1"/>
</dbReference>
<dbReference type="IDEAL" id="IID00740"/>
<dbReference type="InterPro" id="IPR040797">
    <property type="entry name" value="Zmiz1_N"/>
</dbReference>
<dbReference type="InterPro" id="IPR004181">
    <property type="entry name" value="Znf_MIZ"/>
</dbReference>
<dbReference type="InterPro" id="IPR013083">
    <property type="entry name" value="Znf_RING/FYVE/PHD"/>
</dbReference>
<dbReference type="PANTHER" id="PTHR10782">
    <property type="entry name" value="ZINC FINGER MIZ DOMAIN-CONTAINING PROTEIN"/>
    <property type="match status" value="1"/>
</dbReference>
<dbReference type="PANTHER" id="PTHR10782:SF7">
    <property type="entry name" value="ZINC FINGER MIZ DOMAIN-CONTAINING PROTEIN 1"/>
    <property type="match status" value="1"/>
</dbReference>
<dbReference type="Pfam" id="PF02891">
    <property type="entry name" value="zf-MIZ"/>
    <property type="match status" value="1"/>
</dbReference>
<dbReference type="Pfam" id="PF18028">
    <property type="entry name" value="Zmiz1_N"/>
    <property type="match status" value="1"/>
</dbReference>
<dbReference type="PROSITE" id="PS51044">
    <property type="entry name" value="ZF_SP_RING"/>
    <property type="match status" value="1"/>
</dbReference>
<gene>
    <name evidence="10" type="primary">ZMIZ1</name>
    <name type="synonym">KIAA1224</name>
    <name type="synonym">RAI17</name>
    <name type="synonym">ZIMP10</name>
</gene>
<organism>
    <name type="scientific">Homo sapiens</name>
    <name type="common">Human</name>
    <dbReference type="NCBI Taxonomy" id="9606"/>
    <lineage>
        <taxon>Eukaryota</taxon>
        <taxon>Metazoa</taxon>
        <taxon>Chordata</taxon>
        <taxon>Craniata</taxon>
        <taxon>Vertebrata</taxon>
        <taxon>Euteleostomi</taxon>
        <taxon>Mammalia</taxon>
        <taxon>Eutheria</taxon>
        <taxon>Euarchontoglires</taxon>
        <taxon>Primates</taxon>
        <taxon>Haplorrhini</taxon>
        <taxon>Catarrhini</taxon>
        <taxon>Hominidae</taxon>
        <taxon>Homo</taxon>
    </lineage>
</organism>